<accession>E1RHR1</accession>
<proteinExistence type="inferred from homology"/>
<comment type="function">
    <text evidence="1">Involved in protein export.</text>
</comment>
<comment type="subunit">
    <text evidence="1">Part of the protein translocation apparatus. Forms a complex with SecF.</text>
</comment>
<comment type="subcellular location">
    <subcellularLocation>
        <location evidence="1">Cell membrane</location>
        <topology evidence="1">Multi-pass membrane protein</topology>
    </subcellularLocation>
</comment>
<comment type="similarity">
    <text evidence="1">Belongs to the SecD/SecF family. SecD subfamily.</text>
</comment>
<name>SECD_METP4</name>
<evidence type="ECO:0000255" key="1">
    <source>
        <dbReference type="HAMAP-Rule" id="MF_01463"/>
    </source>
</evidence>
<gene>
    <name evidence="1" type="primary">secD</name>
    <name type="ordered locus">Mpet_1696</name>
</gene>
<organism>
    <name type="scientific">Methanolacinia petrolearia (strain DSM 11571 / OCM 486 / SEBR 4847)</name>
    <name type="common">Methanoplanus petrolearius</name>
    <dbReference type="NCBI Taxonomy" id="679926"/>
    <lineage>
        <taxon>Archaea</taxon>
        <taxon>Methanobacteriati</taxon>
        <taxon>Methanobacteriota</taxon>
        <taxon>Stenosarchaea group</taxon>
        <taxon>Methanomicrobia</taxon>
        <taxon>Methanomicrobiales</taxon>
        <taxon>Methanomicrobiaceae</taxon>
        <taxon>Methanolacinia</taxon>
    </lineage>
</organism>
<feature type="chain" id="PRO_5000639431" description="Protein-export membrane protein SecD">
    <location>
        <begin position="1"/>
        <end position="489"/>
    </location>
</feature>
<feature type="transmembrane region" description="Helical" evidence="1">
    <location>
        <begin position="17"/>
        <end position="37"/>
    </location>
</feature>
<feature type="transmembrane region" description="Helical" evidence="1">
    <location>
        <begin position="328"/>
        <end position="348"/>
    </location>
</feature>
<feature type="transmembrane region" description="Helical" evidence="1">
    <location>
        <begin position="356"/>
        <end position="376"/>
    </location>
</feature>
<feature type="transmembrane region" description="Helical" evidence="1">
    <location>
        <begin position="384"/>
        <end position="404"/>
    </location>
</feature>
<feature type="transmembrane region" description="Helical" evidence="1">
    <location>
        <begin position="428"/>
        <end position="448"/>
    </location>
</feature>
<feature type="transmembrane region" description="Helical" evidence="1">
    <location>
        <begin position="450"/>
        <end position="470"/>
    </location>
</feature>
<keyword id="KW-1003">Cell membrane</keyword>
<keyword id="KW-0472">Membrane</keyword>
<keyword id="KW-0653">Protein transport</keyword>
<keyword id="KW-1185">Reference proteome</keyword>
<keyword id="KW-0811">Translocation</keyword>
<keyword id="KW-0812">Transmembrane</keyword>
<keyword id="KW-1133">Transmembrane helix</keyword>
<keyword id="KW-0813">Transport</keyword>
<reference key="1">
    <citation type="journal article" date="2010" name="Stand. Genomic Sci.">
        <title>Complete genome sequence of Methanoplanus petrolearius type strain (SEBR 4847).</title>
        <authorList>
            <person name="Brambilla E."/>
            <person name="Djao O.D."/>
            <person name="Daligault H."/>
            <person name="Lapidus A."/>
            <person name="Lucas S."/>
            <person name="Hammon N."/>
            <person name="Nolan M."/>
            <person name="Tice H."/>
            <person name="Cheng J.F."/>
            <person name="Han C."/>
            <person name="Tapia R."/>
            <person name="Goodwin L."/>
            <person name="Pitluck S."/>
            <person name="Liolios K."/>
            <person name="Ivanova N."/>
            <person name="Mavromatis K."/>
            <person name="Mikhailova N."/>
            <person name="Pati A."/>
            <person name="Chen A."/>
            <person name="Palaniappan K."/>
            <person name="Land M."/>
            <person name="Hauser L."/>
            <person name="Chang Y.J."/>
            <person name="Jeffries C.D."/>
            <person name="Rohde M."/>
            <person name="Spring S."/>
            <person name="Sikorski J."/>
            <person name="Goker M."/>
            <person name="Woyke T."/>
            <person name="Bristow J."/>
            <person name="Eisen J.A."/>
            <person name="Markowitz V."/>
            <person name="Hugenholtz P."/>
            <person name="Kyrpides N.C."/>
            <person name="Klenk H.P."/>
        </authorList>
    </citation>
    <scope>NUCLEOTIDE SEQUENCE [LARGE SCALE GENOMIC DNA]</scope>
    <source>
        <strain>DSM 11571 / OCM 486 / SEBR 4847</strain>
    </source>
</reference>
<protein>
    <recommendedName>
        <fullName evidence="1">Protein-export membrane protein SecD</fullName>
    </recommendedName>
</protein>
<dbReference type="EMBL" id="CP002117">
    <property type="protein sequence ID" value="ADN36449.1"/>
    <property type="molecule type" value="Genomic_DNA"/>
</dbReference>
<dbReference type="RefSeq" id="WP_013329626.1">
    <property type="nucleotide sequence ID" value="NC_014507.1"/>
</dbReference>
<dbReference type="SMR" id="E1RHR1"/>
<dbReference type="STRING" id="679926.Mpet_1696"/>
<dbReference type="GeneID" id="9744168"/>
<dbReference type="KEGG" id="mpi:Mpet_1696"/>
<dbReference type="eggNOG" id="arCOG03055">
    <property type="taxonomic scope" value="Archaea"/>
</dbReference>
<dbReference type="HOGENOM" id="CLU_007894_5_1_2"/>
<dbReference type="OrthoDB" id="146638at2157"/>
<dbReference type="Proteomes" id="UP000006565">
    <property type="component" value="Chromosome"/>
</dbReference>
<dbReference type="GO" id="GO:0005886">
    <property type="term" value="C:plasma membrane"/>
    <property type="evidence" value="ECO:0007669"/>
    <property type="project" value="UniProtKB-SubCell"/>
</dbReference>
<dbReference type="GO" id="GO:0065002">
    <property type="term" value="P:intracellular protein transmembrane transport"/>
    <property type="evidence" value="ECO:0007669"/>
    <property type="project" value="UniProtKB-UniRule"/>
</dbReference>
<dbReference type="GO" id="GO:0006605">
    <property type="term" value="P:protein targeting"/>
    <property type="evidence" value="ECO:0007669"/>
    <property type="project" value="UniProtKB-UniRule"/>
</dbReference>
<dbReference type="Gene3D" id="3.30.1360.200">
    <property type="match status" value="1"/>
</dbReference>
<dbReference type="Gene3D" id="3.30.70.3400">
    <property type="match status" value="1"/>
</dbReference>
<dbReference type="Gene3D" id="1.20.1640.10">
    <property type="entry name" value="Multidrug efflux transporter AcrB transmembrane domain"/>
    <property type="match status" value="1"/>
</dbReference>
<dbReference type="HAMAP" id="MF_01463_A">
    <property type="entry name" value="SecD_A"/>
    <property type="match status" value="1"/>
</dbReference>
<dbReference type="InterPro" id="IPR022813">
    <property type="entry name" value="SecD/SecF_arch_bac"/>
</dbReference>
<dbReference type="InterPro" id="IPR024912">
    <property type="entry name" value="SecD_arc"/>
</dbReference>
<dbReference type="InterPro" id="IPR048634">
    <property type="entry name" value="SecD_SecF_C"/>
</dbReference>
<dbReference type="NCBIfam" id="NF006217">
    <property type="entry name" value="PRK08343.1-3"/>
    <property type="match status" value="1"/>
</dbReference>
<dbReference type="PANTHER" id="PTHR30081:SF1">
    <property type="entry name" value="PROTEIN TRANSLOCASE SUBUNIT SECD"/>
    <property type="match status" value="1"/>
</dbReference>
<dbReference type="PANTHER" id="PTHR30081">
    <property type="entry name" value="PROTEIN-EXPORT MEMBRANE PROTEIN SEC"/>
    <property type="match status" value="1"/>
</dbReference>
<dbReference type="Pfam" id="PF02355">
    <property type="entry name" value="SecD_SecF_C"/>
    <property type="match status" value="1"/>
</dbReference>
<dbReference type="SUPFAM" id="SSF82866">
    <property type="entry name" value="Multidrug efflux transporter AcrB transmembrane domain"/>
    <property type="match status" value="1"/>
</dbReference>
<sequence>MAEEKSTLGKIFTDWQVLIVLVLVILSVLSIYAIPPALDKGISGNLQLGLDLVGGSWIQLSFKSEVIGYESDMSQSDFITQLSEKLDADVIPVTSSSVEIREYYTKEELESVLAGMGAKLVTYEQGISKETADTVKGILEDKVNTLGTKDVQINTLTGANDVTKYVRVELAGTDINTAQEIVSSQGKFEIRIVTSGNETERVLSGDAVTSVSTPSQRNNYWGVGFTLSAEGAEALRDACIQYGAVTDPDSHNLVMLLDGEQVYSAPLSSDLAAKLSKGPVNDLSASTGYGEEGYNDAEVLEIHLRAGALPVDVEIAGSSSVTAERGEFIQIVCIAAAILGLLAVAFMVYYRYREPSIVVPMILVNLSEIIILLGIARYIQQLDLASIAGLIAVIGTGIDQLVVITDEVLHEGRVPSPSLYLKRFKRALGIITVSASTTIFAMLPLALMDLSTLKGFAIITILGVLIGVIFTRPAYGKIIMAILSKKPAK</sequence>